<proteinExistence type="inferred from homology"/>
<comment type="function">
    <text evidence="1">Responsible for synthesis of pseudouridine from uracil-55 in the psi GC loop of transfer RNAs.</text>
</comment>
<comment type="catalytic activity">
    <reaction evidence="1">
        <text>uridine(55) in tRNA = pseudouridine(55) in tRNA</text>
        <dbReference type="Rhea" id="RHEA:42532"/>
        <dbReference type="Rhea" id="RHEA-COMP:10101"/>
        <dbReference type="Rhea" id="RHEA-COMP:10102"/>
        <dbReference type="ChEBI" id="CHEBI:65314"/>
        <dbReference type="ChEBI" id="CHEBI:65315"/>
        <dbReference type="EC" id="5.4.99.25"/>
    </reaction>
</comment>
<comment type="similarity">
    <text evidence="1">Belongs to the pseudouridine synthase TruB family. Type 1 subfamily.</text>
</comment>
<dbReference type="EC" id="5.4.99.25" evidence="1"/>
<dbReference type="EMBL" id="AL935263">
    <property type="protein sequence ID" value="CCC79278.1"/>
    <property type="molecule type" value="Genomic_DNA"/>
</dbReference>
<dbReference type="RefSeq" id="WP_003640716.1">
    <property type="nucleotide sequence ID" value="NC_004567.2"/>
</dbReference>
<dbReference type="RefSeq" id="YP_004889792.1">
    <property type="nucleotide sequence ID" value="NC_004567.2"/>
</dbReference>
<dbReference type="SMR" id="Q88VL5"/>
<dbReference type="STRING" id="220668.lp_2032"/>
<dbReference type="EnsemblBacteria" id="CCC79278">
    <property type="protein sequence ID" value="CCC79278"/>
    <property type="gene ID" value="lp_2032"/>
</dbReference>
<dbReference type="GeneID" id="77218354"/>
<dbReference type="KEGG" id="lpl:lp_2032"/>
<dbReference type="PATRIC" id="fig|220668.9.peg.1717"/>
<dbReference type="eggNOG" id="COG0130">
    <property type="taxonomic scope" value="Bacteria"/>
</dbReference>
<dbReference type="HOGENOM" id="CLU_032087_0_1_9"/>
<dbReference type="OrthoDB" id="9802309at2"/>
<dbReference type="PhylomeDB" id="Q88VL5"/>
<dbReference type="Proteomes" id="UP000000432">
    <property type="component" value="Chromosome"/>
</dbReference>
<dbReference type="GO" id="GO:0003723">
    <property type="term" value="F:RNA binding"/>
    <property type="evidence" value="ECO:0007669"/>
    <property type="project" value="InterPro"/>
</dbReference>
<dbReference type="GO" id="GO:0160148">
    <property type="term" value="F:tRNA pseudouridine(55) synthase activity"/>
    <property type="evidence" value="ECO:0007669"/>
    <property type="project" value="UniProtKB-EC"/>
</dbReference>
<dbReference type="GO" id="GO:1990481">
    <property type="term" value="P:mRNA pseudouridine synthesis"/>
    <property type="evidence" value="ECO:0007669"/>
    <property type="project" value="TreeGrafter"/>
</dbReference>
<dbReference type="GO" id="GO:0031119">
    <property type="term" value="P:tRNA pseudouridine synthesis"/>
    <property type="evidence" value="ECO:0007669"/>
    <property type="project" value="UniProtKB-UniRule"/>
</dbReference>
<dbReference type="CDD" id="cd02573">
    <property type="entry name" value="PseudoU_synth_EcTruB"/>
    <property type="match status" value="1"/>
</dbReference>
<dbReference type="FunFam" id="3.30.2350.10:FF:000011">
    <property type="entry name" value="tRNA pseudouridine synthase B"/>
    <property type="match status" value="1"/>
</dbReference>
<dbReference type="Gene3D" id="3.30.2350.10">
    <property type="entry name" value="Pseudouridine synthase"/>
    <property type="match status" value="1"/>
</dbReference>
<dbReference type="HAMAP" id="MF_01080">
    <property type="entry name" value="TruB_bact"/>
    <property type="match status" value="1"/>
</dbReference>
<dbReference type="InterPro" id="IPR020103">
    <property type="entry name" value="PsdUridine_synth_cat_dom_sf"/>
</dbReference>
<dbReference type="InterPro" id="IPR002501">
    <property type="entry name" value="PsdUridine_synth_N"/>
</dbReference>
<dbReference type="InterPro" id="IPR014780">
    <property type="entry name" value="tRNA_psdUridine_synth_TruB"/>
</dbReference>
<dbReference type="InterPro" id="IPR032819">
    <property type="entry name" value="TruB_C"/>
</dbReference>
<dbReference type="NCBIfam" id="TIGR00431">
    <property type="entry name" value="TruB"/>
    <property type="match status" value="1"/>
</dbReference>
<dbReference type="PANTHER" id="PTHR13767:SF2">
    <property type="entry name" value="PSEUDOURIDYLATE SYNTHASE TRUB1"/>
    <property type="match status" value="1"/>
</dbReference>
<dbReference type="PANTHER" id="PTHR13767">
    <property type="entry name" value="TRNA-PSEUDOURIDINE SYNTHASE"/>
    <property type="match status" value="1"/>
</dbReference>
<dbReference type="Pfam" id="PF16198">
    <property type="entry name" value="TruB_C_2"/>
    <property type="match status" value="1"/>
</dbReference>
<dbReference type="Pfam" id="PF01509">
    <property type="entry name" value="TruB_N"/>
    <property type="match status" value="1"/>
</dbReference>
<dbReference type="SUPFAM" id="SSF55120">
    <property type="entry name" value="Pseudouridine synthase"/>
    <property type="match status" value="1"/>
</dbReference>
<reference key="1">
    <citation type="journal article" date="2003" name="Proc. Natl. Acad. Sci. U.S.A.">
        <title>Complete genome sequence of Lactobacillus plantarum WCFS1.</title>
        <authorList>
            <person name="Kleerebezem M."/>
            <person name="Boekhorst J."/>
            <person name="van Kranenburg R."/>
            <person name="Molenaar D."/>
            <person name="Kuipers O.P."/>
            <person name="Leer R."/>
            <person name="Tarchini R."/>
            <person name="Peters S.A."/>
            <person name="Sandbrink H.M."/>
            <person name="Fiers M.W.E.J."/>
            <person name="Stiekema W."/>
            <person name="Klein Lankhorst R.M."/>
            <person name="Bron P.A."/>
            <person name="Hoffer S.M."/>
            <person name="Nierop Groot M.N."/>
            <person name="Kerkhoven R."/>
            <person name="De Vries M."/>
            <person name="Ursing B."/>
            <person name="De Vos W.M."/>
            <person name="Siezen R.J."/>
        </authorList>
    </citation>
    <scope>NUCLEOTIDE SEQUENCE [LARGE SCALE GENOMIC DNA]</scope>
    <source>
        <strain>ATCC BAA-793 / NCIMB 8826 / WCFS1</strain>
    </source>
</reference>
<reference key="2">
    <citation type="journal article" date="2012" name="J. Bacteriol.">
        <title>Complete resequencing and reannotation of the Lactobacillus plantarum WCFS1 genome.</title>
        <authorList>
            <person name="Siezen R.J."/>
            <person name="Francke C."/>
            <person name="Renckens B."/>
            <person name="Boekhorst J."/>
            <person name="Wels M."/>
            <person name="Kleerebezem M."/>
            <person name="van Hijum S.A."/>
        </authorList>
    </citation>
    <scope>NUCLEOTIDE SEQUENCE [LARGE SCALE GENOMIC DNA]</scope>
    <scope>GENOME REANNOTATION</scope>
    <source>
        <strain>ATCC BAA-793 / NCIMB 8826 / WCFS1</strain>
    </source>
</reference>
<gene>
    <name evidence="1" type="primary">truB</name>
    <name type="ordered locus">lp_2032</name>
</gene>
<sequence length="307" mass="33636">MLNGILPLYKPRGMTSFDCVAKIRRLYQTRKVGHSGTLDPNVDGVLPICIGNATKVVQFLVASGKEYQGSITLGFATTTEDLDGEEIARQAVTEPFTSDQVDAALAQMTGAITQIPPMFSAVKVNGRRLYDYARSGETVERPERHITISSFKQRQASTYDSATQTQTIYFTVACSKGTYVRTLAVDVGKVLGVPAVMSDLTRLKSGGFTLDETVTFEEIAAHVDAGTAGALLAPIDKALSQYPRVTLTDEQWQRVKNGAFITAAEGQQTDPDANTMVALVYQNSLKCLYSYRPDEQRYKPFKMFAVN</sequence>
<keyword id="KW-0413">Isomerase</keyword>
<keyword id="KW-1185">Reference proteome</keyword>
<keyword id="KW-0819">tRNA processing</keyword>
<protein>
    <recommendedName>
        <fullName evidence="1">tRNA pseudouridine synthase B</fullName>
        <ecNumber evidence="1">5.4.99.25</ecNumber>
    </recommendedName>
    <alternativeName>
        <fullName evidence="1">tRNA pseudouridine(55) synthase</fullName>
        <shortName evidence="1">Psi55 synthase</shortName>
    </alternativeName>
    <alternativeName>
        <fullName evidence="1">tRNA pseudouridylate synthase</fullName>
    </alternativeName>
    <alternativeName>
        <fullName evidence="1">tRNA-uridine isomerase</fullName>
    </alternativeName>
</protein>
<organism>
    <name type="scientific">Lactiplantibacillus plantarum (strain ATCC BAA-793 / NCIMB 8826 / WCFS1)</name>
    <name type="common">Lactobacillus plantarum</name>
    <dbReference type="NCBI Taxonomy" id="220668"/>
    <lineage>
        <taxon>Bacteria</taxon>
        <taxon>Bacillati</taxon>
        <taxon>Bacillota</taxon>
        <taxon>Bacilli</taxon>
        <taxon>Lactobacillales</taxon>
        <taxon>Lactobacillaceae</taxon>
        <taxon>Lactiplantibacillus</taxon>
    </lineage>
</organism>
<evidence type="ECO:0000255" key="1">
    <source>
        <dbReference type="HAMAP-Rule" id="MF_01080"/>
    </source>
</evidence>
<feature type="chain" id="PRO_0000121850" description="tRNA pseudouridine synthase B">
    <location>
        <begin position="1"/>
        <end position="307"/>
    </location>
</feature>
<feature type="active site" description="Nucleophile" evidence="1">
    <location>
        <position position="39"/>
    </location>
</feature>
<name>TRUB_LACPL</name>
<accession>Q88VL5</accession>
<accession>F9UPY9</accession>